<proteinExistence type="evidence at protein level"/>
<protein>
    <recommendedName>
        <fullName>Cysteine-rich protein 1</fullName>
        <shortName>CRP-1</shortName>
    </recommendedName>
    <alternativeName>
        <fullName>Cysteine-rich heart protein</fullName>
        <shortName>CRHP</shortName>
        <shortName>hCRHP</shortName>
    </alternativeName>
    <alternativeName>
        <fullName>Cysteine-rich intestinal protein</fullName>
        <shortName>CRIP</shortName>
    </alternativeName>
</protein>
<feature type="chain" id="PRO_0000075707" description="Cysteine-rich protein 1">
    <location>
        <begin position="1"/>
        <end position="77"/>
    </location>
</feature>
<feature type="domain" description="LIM zinc-binding" evidence="2">
    <location>
        <begin position="2"/>
        <end position="63"/>
    </location>
</feature>
<feature type="modified residue" description="N6-acetyllysine" evidence="4">
    <location>
        <position position="9"/>
    </location>
</feature>
<feature type="modified residue" description="N6-acetyllysine" evidence="1">
    <location>
        <position position="22"/>
    </location>
</feature>
<feature type="modified residue" description="Omega-N-methylarginine" evidence="1">
    <location>
        <position position="68"/>
    </location>
</feature>
<feature type="sequence conflict" description="In Ref. 1; AAA64537." evidence="3" ref="1">
    <original>A</original>
    <variation>V</variation>
    <location>
        <position position="58"/>
    </location>
</feature>
<name>CRIP1_HUMAN</name>
<dbReference type="EMBL" id="U09770">
    <property type="protein sequence ID" value="AAA64537.1"/>
    <property type="molecule type" value="mRNA"/>
</dbReference>
<dbReference type="EMBL" id="U58630">
    <property type="protein sequence ID" value="AAB61158.1"/>
    <property type="molecule type" value="mRNA"/>
</dbReference>
<dbReference type="EMBL" id="BT007181">
    <property type="protein sequence ID" value="AAP35845.1"/>
    <property type="molecule type" value="mRNA"/>
</dbReference>
<dbReference type="EMBL" id="AL928654">
    <property type="status" value="NOT_ANNOTATED_CDS"/>
    <property type="molecule type" value="Genomic_DNA"/>
</dbReference>
<dbReference type="EMBL" id="BC002738">
    <property type="protein sequence ID" value="AAH02738.1"/>
    <property type="molecule type" value="mRNA"/>
</dbReference>
<dbReference type="CCDS" id="CCDS10004.1"/>
<dbReference type="PIR" id="G02666">
    <property type="entry name" value="G02666"/>
</dbReference>
<dbReference type="PIR" id="JC2431">
    <property type="entry name" value="JC2431"/>
</dbReference>
<dbReference type="RefSeq" id="NP_001302.1">
    <property type="nucleotide sequence ID" value="NM_001311.5"/>
</dbReference>
<dbReference type="SMR" id="P50238"/>
<dbReference type="BioGRID" id="107786">
    <property type="interactions" value="55"/>
</dbReference>
<dbReference type="FunCoup" id="P50238">
    <property type="interactions" value="672"/>
</dbReference>
<dbReference type="IntAct" id="P50238">
    <property type="interactions" value="8"/>
</dbReference>
<dbReference type="STRING" id="9606.ENSP00000332449"/>
<dbReference type="GlyGen" id="P50238">
    <property type="glycosylation" value="1 site, 1 O-linked glycan (1 site)"/>
</dbReference>
<dbReference type="iPTMnet" id="P50238"/>
<dbReference type="PhosphoSitePlus" id="P50238"/>
<dbReference type="BioMuta" id="CRIP1"/>
<dbReference type="DMDM" id="20981688"/>
<dbReference type="jPOST" id="P50238"/>
<dbReference type="MassIVE" id="P50238"/>
<dbReference type="PaxDb" id="9606-ENSP00000332449"/>
<dbReference type="PeptideAtlas" id="P50238"/>
<dbReference type="ProteomicsDB" id="56212"/>
<dbReference type="Pumba" id="P50238"/>
<dbReference type="TopDownProteomics" id="P50238"/>
<dbReference type="Antibodypedia" id="47461">
    <property type="antibodies" value="124 antibodies from 23 providers"/>
</dbReference>
<dbReference type="DNASU" id="1396"/>
<dbReference type="Ensembl" id="ENST00000330233.11">
    <property type="protein sequence ID" value="ENSP00000332449.7"/>
    <property type="gene ID" value="ENSG00000213145.10"/>
</dbReference>
<dbReference type="Ensembl" id="ENST00000392531.4">
    <property type="protein sequence ID" value="ENSP00000376315.3"/>
    <property type="gene ID" value="ENSG00000213145.10"/>
</dbReference>
<dbReference type="Ensembl" id="ENST00000409393.6">
    <property type="protein sequence ID" value="ENSP00000386340.2"/>
    <property type="gene ID" value="ENSG00000213145.10"/>
</dbReference>
<dbReference type="GeneID" id="1396"/>
<dbReference type="KEGG" id="hsa:1396"/>
<dbReference type="MANE-Select" id="ENST00000392531.4">
    <property type="protein sequence ID" value="ENSP00000376315.3"/>
    <property type="RefSeq nucleotide sequence ID" value="NM_001311.5"/>
    <property type="RefSeq protein sequence ID" value="NP_001302.1"/>
</dbReference>
<dbReference type="UCSC" id="uc001yri.5">
    <property type="organism name" value="human"/>
</dbReference>
<dbReference type="AGR" id="HGNC:2360"/>
<dbReference type="CTD" id="1396"/>
<dbReference type="DisGeNET" id="1396"/>
<dbReference type="GeneCards" id="CRIP1"/>
<dbReference type="HGNC" id="HGNC:2360">
    <property type="gene designation" value="CRIP1"/>
</dbReference>
<dbReference type="HPA" id="ENSG00000213145">
    <property type="expression patterns" value="Low tissue specificity"/>
</dbReference>
<dbReference type="MIM" id="123875">
    <property type="type" value="gene"/>
</dbReference>
<dbReference type="neXtProt" id="NX_P50238"/>
<dbReference type="OpenTargets" id="ENSG00000213145"/>
<dbReference type="PharmGKB" id="PA26878"/>
<dbReference type="VEuPathDB" id="HostDB:ENSG00000213145"/>
<dbReference type="eggNOG" id="KOG1700">
    <property type="taxonomic scope" value="Eukaryota"/>
</dbReference>
<dbReference type="GeneTree" id="ENSGT00940000162342"/>
<dbReference type="HOGENOM" id="CLU_026811_4_1_1"/>
<dbReference type="InParanoid" id="P50238"/>
<dbReference type="OMA" id="HNPCYSA"/>
<dbReference type="OrthoDB" id="25654at2759"/>
<dbReference type="PAN-GO" id="P50238">
    <property type="GO annotations" value="3 GO annotations based on evolutionary models"/>
</dbReference>
<dbReference type="PhylomeDB" id="P50238"/>
<dbReference type="PathwayCommons" id="P50238"/>
<dbReference type="SignaLink" id="P50238"/>
<dbReference type="BioGRID-ORCS" id="1396">
    <property type="hits" value="9 hits in 1132 CRISPR screens"/>
</dbReference>
<dbReference type="ChiTaRS" id="CRIP1">
    <property type="organism name" value="human"/>
</dbReference>
<dbReference type="GeneWiki" id="CRIP1"/>
<dbReference type="GenomeRNAi" id="1396"/>
<dbReference type="Pharos" id="P50238">
    <property type="development level" value="Tbio"/>
</dbReference>
<dbReference type="PRO" id="PR:P50238"/>
<dbReference type="Proteomes" id="UP000005640">
    <property type="component" value="Chromosome 14"/>
</dbReference>
<dbReference type="RNAct" id="P50238">
    <property type="molecule type" value="protein"/>
</dbReference>
<dbReference type="Bgee" id="ENSG00000213145">
    <property type="expression patterns" value="Expressed in right coronary artery and 95 other cell types or tissues"/>
</dbReference>
<dbReference type="GO" id="GO:0005737">
    <property type="term" value="C:cytoplasm"/>
    <property type="evidence" value="ECO:0000314"/>
    <property type="project" value="UniProtKB"/>
</dbReference>
<dbReference type="GO" id="GO:0042277">
    <property type="term" value="F:peptide binding"/>
    <property type="evidence" value="ECO:0000314"/>
    <property type="project" value="UniProtKB"/>
</dbReference>
<dbReference type="GO" id="GO:0008270">
    <property type="term" value="F:zinc ion binding"/>
    <property type="evidence" value="ECO:0000314"/>
    <property type="project" value="UniProtKB"/>
</dbReference>
<dbReference type="GO" id="GO:0071236">
    <property type="term" value="P:cellular response to antibiotic"/>
    <property type="evidence" value="ECO:0000314"/>
    <property type="project" value="UniProtKB"/>
</dbReference>
<dbReference type="GO" id="GO:0071493">
    <property type="term" value="P:cellular response to UV-B"/>
    <property type="evidence" value="ECO:0000314"/>
    <property type="project" value="UniProtKB"/>
</dbReference>
<dbReference type="GO" id="GO:0007507">
    <property type="term" value="P:heart development"/>
    <property type="evidence" value="ECO:0000304"/>
    <property type="project" value="UniProtKB"/>
</dbReference>
<dbReference type="GO" id="GO:0006955">
    <property type="term" value="P:immune response"/>
    <property type="evidence" value="ECO:0000270"/>
    <property type="project" value="UniProtKB"/>
</dbReference>
<dbReference type="GO" id="GO:0008630">
    <property type="term" value="P:intrinsic apoptotic signaling pathway in response to DNA damage"/>
    <property type="evidence" value="ECO:0000314"/>
    <property type="project" value="UniProtKB"/>
</dbReference>
<dbReference type="GO" id="GO:0060741">
    <property type="term" value="P:prostate gland stromal morphogenesis"/>
    <property type="evidence" value="ECO:0000270"/>
    <property type="project" value="UniProtKB"/>
</dbReference>
<dbReference type="GO" id="GO:0010468">
    <property type="term" value="P:regulation of gene expression"/>
    <property type="evidence" value="ECO:0000270"/>
    <property type="project" value="UniProtKB"/>
</dbReference>
<dbReference type="GO" id="GO:0010043">
    <property type="term" value="P:response to zinc ion"/>
    <property type="evidence" value="ECO:0000314"/>
    <property type="project" value="UniProtKB"/>
</dbReference>
<dbReference type="CDD" id="cd09478">
    <property type="entry name" value="LIM_CRIP"/>
    <property type="match status" value="1"/>
</dbReference>
<dbReference type="FunFam" id="2.10.110.10:FF:000054">
    <property type="entry name" value="Cysteine-rich protein 1"/>
    <property type="match status" value="1"/>
</dbReference>
<dbReference type="Gene3D" id="2.10.110.10">
    <property type="entry name" value="Cysteine Rich Protein"/>
    <property type="match status" value="1"/>
</dbReference>
<dbReference type="InterPro" id="IPR001781">
    <property type="entry name" value="Znf_LIM"/>
</dbReference>
<dbReference type="PANTHER" id="PTHR46074:SF3">
    <property type="entry name" value="CYSTEINE-RICH PROTEIN 1"/>
    <property type="match status" value="1"/>
</dbReference>
<dbReference type="PANTHER" id="PTHR46074">
    <property type="entry name" value="CYSTEINE-RICH PROTEIN CRIP FAMILY MEMBER"/>
    <property type="match status" value="1"/>
</dbReference>
<dbReference type="Pfam" id="PF00412">
    <property type="entry name" value="LIM"/>
    <property type="match status" value="1"/>
</dbReference>
<dbReference type="SMART" id="SM00132">
    <property type="entry name" value="LIM"/>
    <property type="match status" value="1"/>
</dbReference>
<dbReference type="SUPFAM" id="SSF57716">
    <property type="entry name" value="Glucocorticoid receptor-like (DNA-binding domain)"/>
    <property type="match status" value="2"/>
</dbReference>
<dbReference type="PROSITE" id="PS00478">
    <property type="entry name" value="LIM_DOMAIN_1"/>
    <property type="match status" value="1"/>
</dbReference>
<dbReference type="PROSITE" id="PS50023">
    <property type="entry name" value="LIM_DOMAIN_2"/>
    <property type="match status" value="1"/>
</dbReference>
<accession>P50238</accession>
<accession>H3BPI2</accession>
<accession>Q13628</accession>
<accession>Q53XY7</accession>
<accession>Q96J34</accession>
<sequence length="77" mass="8533">MPKCPKCNKEVYFAERVTSLGKDWHRPCLKCEKCGKTLTSGGHAEHEGKPYCNHPCYAAMFGPKGFGRGGAESHTFK</sequence>
<organism>
    <name type="scientific">Homo sapiens</name>
    <name type="common">Human</name>
    <dbReference type="NCBI Taxonomy" id="9606"/>
    <lineage>
        <taxon>Eukaryota</taxon>
        <taxon>Metazoa</taxon>
        <taxon>Chordata</taxon>
        <taxon>Craniata</taxon>
        <taxon>Vertebrata</taxon>
        <taxon>Euteleostomi</taxon>
        <taxon>Mammalia</taxon>
        <taxon>Eutheria</taxon>
        <taxon>Euarchontoglires</taxon>
        <taxon>Primates</taxon>
        <taxon>Haplorrhini</taxon>
        <taxon>Catarrhini</taxon>
        <taxon>Hominidae</taxon>
        <taxon>Homo</taxon>
    </lineage>
</organism>
<evidence type="ECO:0000250" key="1">
    <source>
        <dbReference type="UniProtKB" id="P63254"/>
    </source>
</evidence>
<evidence type="ECO:0000255" key="2">
    <source>
        <dbReference type="PROSITE-ProRule" id="PRU00125"/>
    </source>
</evidence>
<evidence type="ECO:0000305" key="3"/>
<evidence type="ECO:0007744" key="4">
    <source>
    </source>
</evidence>
<reference key="1">
    <citation type="journal article" date="1994" name="Biochem. Biophys. Res. Commun.">
        <title>Isolation and characterization of a cDNA that codes for a LIM-containing protein which is developmentally regulated in heart.</title>
        <authorList>
            <person name="Tsui S.K.W."/>
            <person name="Yam N.Y."/>
            <person name="Lee C.-Y."/>
            <person name="Waye M.M.Y."/>
        </authorList>
    </citation>
    <scope>NUCLEOTIDE SEQUENCE [MRNA]</scope>
    <source>
        <tissue>Heart</tissue>
    </source>
</reference>
<reference key="2">
    <citation type="journal article" date="1997" name="Protein Expr. Purif.">
        <title>Human cysteine-rich intestinal protein: cDNA cloning and expression of recombinant protein and identification in human peripheral blood mononuclear cells.</title>
        <authorList>
            <person name="Khoo C."/>
            <person name="Blanchard R.K."/>
            <person name="Sullivan V.K."/>
            <person name="Cousins R.J."/>
        </authorList>
    </citation>
    <scope>NUCLEOTIDE SEQUENCE [MRNA]</scope>
    <source>
        <tissue>Small intestine</tissue>
    </source>
</reference>
<reference key="3">
    <citation type="submission" date="2003-05" db="EMBL/GenBank/DDBJ databases">
        <title>Cloning of human full-length CDSs in BD Creator(TM) system donor vector.</title>
        <authorList>
            <person name="Kalnine N."/>
            <person name="Chen X."/>
            <person name="Rolfs A."/>
            <person name="Halleck A."/>
            <person name="Hines L."/>
            <person name="Eisenstein S."/>
            <person name="Koundinya M."/>
            <person name="Raphael J."/>
            <person name="Moreira D."/>
            <person name="Kelley T."/>
            <person name="LaBaer J."/>
            <person name="Lin Y."/>
            <person name="Phelan M."/>
            <person name="Farmer A."/>
        </authorList>
    </citation>
    <scope>NUCLEOTIDE SEQUENCE [LARGE SCALE MRNA]</scope>
</reference>
<reference key="4">
    <citation type="journal article" date="2003" name="Nature">
        <title>The DNA sequence and analysis of human chromosome 14.</title>
        <authorList>
            <person name="Heilig R."/>
            <person name="Eckenberg R."/>
            <person name="Petit J.-L."/>
            <person name="Fonknechten N."/>
            <person name="Da Silva C."/>
            <person name="Cattolico L."/>
            <person name="Levy M."/>
            <person name="Barbe V."/>
            <person name="De Berardinis V."/>
            <person name="Ureta-Vidal A."/>
            <person name="Pelletier E."/>
            <person name="Vico V."/>
            <person name="Anthouard V."/>
            <person name="Rowen L."/>
            <person name="Madan A."/>
            <person name="Qin S."/>
            <person name="Sun H."/>
            <person name="Du H."/>
            <person name="Pepin K."/>
            <person name="Artiguenave F."/>
            <person name="Robert C."/>
            <person name="Cruaud C."/>
            <person name="Bruels T."/>
            <person name="Jaillon O."/>
            <person name="Friedlander L."/>
            <person name="Samson G."/>
            <person name="Brottier P."/>
            <person name="Cure S."/>
            <person name="Segurens B."/>
            <person name="Aniere F."/>
            <person name="Samain S."/>
            <person name="Crespeau H."/>
            <person name="Abbasi N."/>
            <person name="Aiach N."/>
            <person name="Boscus D."/>
            <person name="Dickhoff R."/>
            <person name="Dors M."/>
            <person name="Dubois I."/>
            <person name="Friedman C."/>
            <person name="Gouyvenoux M."/>
            <person name="James R."/>
            <person name="Madan A."/>
            <person name="Mairey-Estrada B."/>
            <person name="Mangenot S."/>
            <person name="Martins N."/>
            <person name="Menard M."/>
            <person name="Oztas S."/>
            <person name="Ratcliffe A."/>
            <person name="Shaffer T."/>
            <person name="Trask B."/>
            <person name="Vacherie B."/>
            <person name="Bellemere C."/>
            <person name="Belser C."/>
            <person name="Besnard-Gonnet M."/>
            <person name="Bartol-Mavel D."/>
            <person name="Boutard M."/>
            <person name="Briez-Silla S."/>
            <person name="Combette S."/>
            <person name="Dufosse-Laurent V."/>
            <person name="Ferron C."/>
            <person name="Lechaplais C."/>
            <person name="Louesse C."/>
            <person name="Muselet D."/>
            <person name="Magdelenat G."/>
            <person name="Pateau E."/>
            <person name="Petit E."/>
            <person name="Sirvain-Trukniewicz P."/>
            <person name="Trybou A."/>
            <person name="Vega-Czarny N."/>
            <person name="Bataille E."/>
            <person name="Bluet E."/>
            <person name="Bordelais I."/>
            <person name="Dubois M."/>
            <person name="Dumont C."/>
            <person name="Guerin T."/>
            <person name="Haffray S."/>
            <person name="Hammadi R."/>
            <person name="Muanga J."/>
            <person name="Pellouin V."/>
            <person name="Robert D."/>
            <person name="Wunderle E."/>
            <person name="Gauguet G."/>
            <person name="Roy A."/>
            <person name="Sainte-Marthe L."/>
            <person name="Verdier J."/>
            <person name="Verdier-Discala C."/>
            <person name="Hillier L.W."/>
            <person name="Fulton L."/>
            <person name="McPherson J."/>
            <person name="Matsuda F."/>
            <person name="Wilson R."/>
            <person name="Scarpelli C."/>
            <person name="Gyapay G."/>
            <person name="Wincker P."/>
            <person name="Saurin W."/>
            <person name="Quetier F."/>
            <person name="Waterston R."/>
            <person name="Hood L."/>
            <person name="Weissenbach J."/>
        </authorList>
    </citation>
    <scope>NUCLEOTIDE SEQUENCE [LARGE SCALE GENOMIC DNA]</scope>
</reference>
<reference key="5">
    <citation type="journal article" date="2004" name="Genome Res.">
        <title>The status, quality, and expansion of the NIH full-length cDNA project: the Mammalian Gene Collection (MGC).</title>
        <authorList>
            <consortium name="The MGC Project Team"/>
        </authorList>
    </citation>
    <scope>NUCLEOTIDE SEQUENCE [LARGE SCALE MRNA]</scope>
    <source>
        <tissue>Uterus</tissue>
    </source>
</reference>
<reference key="6">
    <citation type="journal article" date="2009" name="Science">
        <title>Lysine acetylation targets protein complexes and co-regulates major cellular functions.</title>
        <authorList>
            <person name="Choudhary C."/>
            <person name="Kumar C."/>
            <person name="Gnad F."/>
            <person name="Nielsen M.L."/>
            <person name="Rehman M."/>
            <person name="Walther T.C."/>
            <person name="Olsen J.V."/>
            <person name="Mann M."/>
        </authorList>
    </citation>
    <scope>ACETYLATION [LARGE SCALE ANALYSIS] AT LYS-9</scope>
    <scope>IDENTIFICATION BY MASS SPECTROMETRY [LARGE SCALE ANALYSIS]</scope>
</reference>
<reference key="7">
    <citation type="journal article" date="2011" name="BMC Syst. Biol.">
        <title>Initial characterization of the human central proteome.</title>
        <authorList>
            <person name="Burkard T.R."/>
            <person name="Planyavsky M."/>
            <person name="Kaupe I."/>
            <person name="Breitwieser F.P."/>
            <person name="Buerckstuemmer T."/>
            <person name="Bennett K.L."/>
            <person name="Superti-Furga G."/>
            <person name="Colinge J."/>
        </authorList>
    </citation>
    <scope>IDENTIFICATION BY MASS SPECTROMETRY [LARGE SCALE ANALYSIS]</scope>
</reference>
<reference key="8">
    <citation type="journal article" date="2012" name="Proc. Natl. Acad. Sci. U.S.A.">
        <title>N-terminal acetylome analyses and functional insights of the N-terminal acetyltransferase NatB.</title>
        <authorList>
            <person name="Van Damme P."/>
            <person name="Lasa M."/>
            <person name="Polevoda B."/>
            <person name="Gazquez C."/>
            <person name="Elosegui-Artola A."/>
            <person name="Kim D.S."/>
            <person name="De Juan-Pardo E."/>
            <person name="Demeyer K."/>
            <person name="Hole K."/>
            <person name="Larrea E."/>
            <person name="Timmerman E."/>
            <person name="Prieto J."/>
            <person name="Arnesen T."/>
            <person name="Sherman F."/>
            <person name="Gevaert K."/>
            <person name="Aldabe R."/>
        </authorList>
    </citation>
    <scope>IDENTIFICATION BY MASS SPECTROMETRY [LARGE SCALE ANALYSIS]</scope>
</reference>
<gene>
    <name type="primary">CRIP1</name>
    <name type="synonym">CRIP</name>
    <name type="synonym">CRP1</name>
</gene>
<keyword id="KW-0007">Acetylation</keyword>
<keyword id="KW-0440">LIM domain</keyword>
<keyword id="KW-0479">Metal-binding</keyword>
<keyword id="KW-0488">Methylation</keyword>
<keyword id="KW-1267">Proteomics identification</keyword>
<keyword id="KW-1185">Reference proteome</keyword>
<keyword id="KW-0862">Zinc</keyword>
<comment type="function">
    <text>Seems to have a role in zinc absorption and may function as an intracellular zinc transport protein.</text>
</comment>